<proteinExistence type="inferred from homology"/>
<organism>
    <name type="scientific">Methanosarcina acetivorans (strain ATCC 35395 / DSM 2834 / JCM 12185 / C2A)</name>
    <dbReference type="NCBI Taxonomy" id="188937"/>
    <lineage>
        <taxon>Archaea</taxon>
        <taxon>Methanobacteriati</taxon>
        <taxon>Methanobacteriota</taxon>
        <taxon>Stenosarchaea group</taxon>
        <taxon>Methanomicrobia</taxon>
        <taxon>Methanosarcinales</taxon>
        <taxon>Methanosarcinaceae</taxon>
        <taxon>Methanosarcina</taxon>
    </lineage>
</organism>
<name>Y601_METAC</name>
<protein>
    <recommendedName>
        <fullName evidence="1">MEMO1 family protein MA_0601</fullName>
    </recommendedName>
</protein>
<accession>Q8TT38</accession>
<evidence type="ECO:0000255" key="1">
    <source>
        <dbReference type="HAMAP-Rule" id="MF_00055"/>
    </source>
</evidence>
<dbReference type="EMBL" id="AE010299">
    <property type="protein sequence ID" value="AAM04045.1"/>
    <property type="molecule type" value="Genomic_DNA"/>
</dbReference>
<dbReference type="RefSeq" id="WP_011020650.1">
    <property type="nucleotide sequence ID" value="NC_003552.1"/>
</dbReference>
<dbReference type="SMR" id="Q8TT38"/>
<dbReference type="FunCoup" id="Q8TT38">
    <property type="interactions" value="108"/>
</dbReference>
<dbReference type="STRING" id="188937.MA_0601"/>
<dbReference type="EnsemblBacteria" id="AAM04045">
    <property type="protein sequence ID" value="AAM04045"/>
    <property type="gene ID" value="MA_0601"/>
</dbReference>
<dbReference type="GeneID" id="1472493"/>
<dbReference type="KEGG" id="mac:MA_0601"/>
<dbReference type="HOGENOM" id="CLU_038085_2_0_2"/>
<dbReference type="InParanoid" id="Q8TT38"/>
<dbReference type="OrthoDB" id="372162at2157"/>
<dbReference type="PhylomeDB" id="Q8TT38"/>
<dbReference type="Proteomes" id="UP000002487">
    <property type="component" value="Chromosome"/>
</dbReference>
<dbReference type="CDD" id="cd07361">
    <property type="entry name" value="MEMO_like"/>
    <property type="match status" value="1"/>
</dbReference>
<dbReference type="Gene3D" id="3.40.830.10">
    <property type="entry name" value="LigB-like"/>
    <property type="match status" value="1"/>
</dbReference>
<dbReference type="HAMAP" id="MF_00055">
    <property type="entry name" value="MEMO1"/>
    <property type="match status" value="1"/>
</dbReference>
<dbReference type="InterPro" id="IPR002737">
    <property type="entry name" value="MEMO1_fam"/>
</dbReference>
<dbReference type="NCBIfam" id="TIGR04336">
    <property type="entry name" value="AmmeMemoSam_B"/>
    <property type="match status" value="1"/>
</dbReference>
<dbReference type="NCBIfam" id="NF001987">
    <property type="entry name" value="PRK00782.1"/>
    <property type="match status" value="1"/>
</dbReference>
<dbReference type="PANTHER" id="PTHR11060">
    <property type="entry name" value="PROTEIN MEMO1"/>
    <property type="match status" value="1"/>
</dbReference>
<dbReference type="PANTHER" id="PTHR11060:SF0">
    <property type="entry name" value="PROTEIN MEMO1"/>
    <property type="match status" value="1"/>
</dbReference>
<dbReference type="Pfam" id="PF01875">
    <property type="entry name" value="Memo"/>
    <property type="match status" value="1"/>
</dbReference>
<dbReference type="SUPFAM" id="SSF53213">
    <property type="entry name" value="LigB-like"/>
    <property type="match status" value="1"/>
</dbReference>
<reference key="1">
    <citation type="journal article" date="2002" name="Genome Res.">
        <title>The genome of Methanosarcina acetivorans reveals extensive metabolic and physiological diversity.</title>
        <authorList>
            <person name="Galagan J.E."/>
            <person name="Nusbaum C."/>
            <person name="Roy A."/>
            <person name="Endrizzi M.G."/>
            <person name="Macdonald P."/>
            <person name="FitzHugh W."/>
            <person name="Calvo S."/>
            <person name="Engels R."/>
            <person name="Smirnov S."/>
            <person name="Atnoor D."/>
            <person name="Brown A."/>
            <person name="Allen N."/>
            <person name="Naylor J."/>
            <person name="Stange-Thomann N."/>
            <person name="DeArellano K."/>
            <person name="Johnson R."/>
            <person name="Linton L."/>
            <person name="McEwan P."/>
            <person name="McKernan K."/>
            <person name="Talamas J."/>
            <person name="Tirrell A."/>
            <person name="Ye W."/>
            <person name="Zimmer A."/>
            <person name="Barber R.D."/>
            <person name="Cann I."/>
            <person name="Graham D.E."/>
            <person name="Grahame D.A."/>
            <person name="Guss A.M."/>
            <person name="Hedderich R."/>
            <person name="Ingram-Smith C."/>
            <person name="Kuettner H.C."/>
            <person name="Krzycki J.A."/>
            <person name="Leigh J.A."/>
            <person name="Li W."/>
            <person name="Liu J."/>
            <person name="Mukhopadhyay B."/>
            <person name="Reeve J.N."/>
            <person name="Smith K."/>
            <person name="Springer T.A."/>
            <person name="Umayam L.A."/>
            <person name="White O."/>
            <person name="White R.H."/>
            <person name="de Macario E.C."/>
            <person name="Ferry J.G."/>
            <person name="Jarrell K.F."/>
            <person name="Jing H."/>
            <person name="Macario A.J.L."/>
            <person name="Paulsen I.T."/>
            <person name="Pritchett M."/>
            <person name="Sowers K.R."/>
            <person name="Swanson R.V."/>
            <person name="Zinder S.H."/>
            <person name="Lander E."/>
            <person name="Metcalf W.W."/>
            <person name="Birren B."/>
        </authorList>
    </citation>
    <scope>NUCLEOTIDE SEQUENCE [LARGE SCALE GENOMIC DNA]</scope>
    <source>
        <strain>ATCC 35395 / DSM 2834 / JCM 12185 / C2A</strain>
    </source>
</reference>
<gene>
    <name type="ordered locus">MA_0601</name>
</gene>
<comment type="similarity">
    <text evidence="1">Belongs to the MEMO1 family.</text>
</comment>
<feature type="chain" id="PRO_0000134378" description="MEMO1 family protein MA_0601">
    <location>
        <begin position="1"/>
        <end position="267"/>
    </location>
</feature>
<keyword id="KW-1185">Reference proteome</keyword>
<sequence length="267" mass="29119">MEMRQPAVAGQFYPLHCENLEKELTRCFEGLEIREREVFGAVCPHAGYIYSGKVAAHVYATLPEADTYVLFGPNHTGYGSPVSLSRETWKTPLGTIDVDLELADGFLGSIVDTDELGHTYEHSIEVQLPFLQYRFGRDFKILPICMGMQDKDTAVEVGSLVADLVSESGKRAVIIASSDFTHYETAEHARETDSEVIDAILKLDVPGMYDSLYRRNASVCGYGPIAAMLSASQKLGGSRATLLEYANSGDVSGDMSAVVGYAAIIVE</sequence>